<name>IF2_BLOPB</name>
<protein>
    <recommendedName>
        <fullName evidence="2">Translation initiation factor IF-2</fullName>
    </recommendedName>
</protein>
<accession>Q493T7</accession>
<dbReference type="EMBL" id="CP000016">
    <property type="protein sequence ID" value="AAZ40748.1"/>
    <property type="molecule type" value="Genomic_DNA"/>
</dbReference>
<dbReference type="RefSeq" id="WP_011282655.1">
    <property type="nucleotide sequence ID" value="NC_007292.1"/>
</dbReference>
<dbReference type="SMR" id="Q493T7"/>
<dbReference type="STRING" id="291272.BPEN_108"/>
<dbReference type="KEGG" id="bpn:BPEN_108"/>
<dbReference type="eggNOG" id="COG0532">
    <property type="taxonomic scope" value="Bacteria"/>
</dbReference>
<dbReference type="HOGENOM" id="CLU_006301_6_3_6"/>
<dbReference type="OrthoDB" id="9811804at2"/>
<dbReference type="Proteomes" id="UP000007794">
    <property type="component" value="Chromosome"/>
</dbReference>
<dbReference type="GO" id="GO:0005829">
    <property type="term" value="C:cytosol"/>
    <property type="evidence" value="ECO:0007669"/>
    <property type="project" value="TreeGrafter"/>
</dbReference>
<dbReference type="GO" id="GO:0005525">
    <property type="term" value="F:GTP binding"/>
    <property type="evidence" value="ECO:0007669"/>
    <property type="project" value="UniProtKB-KW"/>
</dbReference>
<dbReference type="GO" id="GO:0003924">
    <property type="term" value="F:GTPase activity"/>
    <property type="evidence" value="ECO:0007669"/>
    <property type="project" value="UniProtKB-UniRule"/>
</dbReference>
<dbReference type="GO" id="GO:0003743">
    <property type="term" value="F:translation initiation factor activity"/>
    <property type="evidence" value="ECO:0007669"/>
    <property type="project" value="UniProtKB-UniRule"/>
</dbReference>
<dbReference type="CDD" id="cd01887">
    <property type="entry name" value="IF2_eIF5B"/>
    <property type="match status" value="1"/>
</dbReference>
<dbReference type="CDD" id="cd03702">
    <property type="entry name" value="IF2_mtIF2_II"/>
    <property type="match status" value="1"/>
</dbReference>
<dbReference type="CDD" id="cd03692">
    <property type="entry name" value="mtIF2_IVc"/>
    <property type="match status" value="1"/>
</dbReference>
<dbReference type="FunFam" id="2.40.30.10:FF:000007">
    <property type="entry name" value="Translation initiation factor IF-2"/>
    <property type="match status" value="1"/>
</dbReference>
<dbReference type="FunFam" id="2.40.30.10:FF:000008">
    <property type="entry name" value="Translation initiation factor IF-2"/>
    <property type="match status" value="1"/>
</dbReference>
<dbReference type="FunFam" id="3.40.50.10050:FF:000001">
    <property type="entry name" value="Translation initiation factor IF-2"/>
    <property type="match status" value="1"/>
</dbReference>
<dbReference type="FunFam" id="3.40.50.300:FF:000019">
    <property type="entry name" value="Translation initiation factor IF-2"/>
    <property type="match status" value="1"/>
</dbReference>
<dbReference type="Gene3D" id="3.40.50.300">
    <property type="entry name" value="P-loop containing nucleotide triphosphate hydrolases"/>
    <property type="match status" value="1"/>
</dbReference>
<dbReference type="Gene3D" id="3.30.56.50">
    <property type="entry name" value="Putative DNA-binding domain, N-terminal subdomain of bacterial translation initiation factor IF2"/>
    <property type="match status" value="1"/>
</dbReference>
<dbReference type="Gene3D" id="2.40.30.10">
    <property type="entry name" value="Translation factors"/>
    <property type="match status" value="2"/>
</dbReference>
<dbReference type="Gene3D" id="3.40.50.10050">
    <property type="entry name" value="Translation initiation factor IF- 2, domain 3"/>
    <property type="match status" value="1"/>
</dbReference>
<dbReference type="HAMAP" id="MF_00100_B">
    <property type="entry name" value="IF_2_B"/>
    <property type="match status" value="1"/>
</dbReference>
<dbReference type="InterPro" id="IPR009061">
    <property type="entry name" value="DNA-bd_dom_put_sf"/>
</dbReference>
<dbReference type="InterPro" id="IPR053905">
    <property type="entry name" value="EF-G-like_DII"/>
</dbReference>
<dbReference type="InterPro" id="IPR013575">
    <property type="entry name" value="IF2_assoc_dom_bac"/>
</dbReference>
<dbReference type="InterPro" id="IPR044145">
    <property type="entry name" value="IF2_II"/>
</dbReference>
<dbReference type="InterPro" id="IPR006847">
    <property type="entry name" value="IF2_N"/>
</dbReference>
<dbReference type="InterPro" id="IPR027417">
    <property type="entry name" value="P-loop_NTPase"/>
</dbReference>
<dbReference type="InterPro" id="IPR005225">
    <property type="entry name" value="Small_GTP-bd"/>
</dbReference>
<dbReference type="InterPro" id="IPR000795">
    <property type="entry name" value="T_Tr_GTP-bd_dom"/>
</dbReference>
<dbReference type="InterPro" id="IPR000178">
    <property type="entry name" value="TF_IF2_bacterial-like"/>
</dbReference>
<dbReference type="InterPro" id="IPR015760">
    <property type="entry name" value="TIF_IF2"/>
</dbReference>
<dbReference type="InterPro" id="IPR023115">
    <property type="entry name" value="TIF_IF2_dom3"/>
</dbReference>
<dbReference type="InterPro" id="IPR036925">
    <property type="entry name" value="TIF_IF2_dom3_sf"/>
</dbReference>
<dbReference type="InterPro" id="IPR009000">
    <property type="entry name" value="Transl_B-barrel_sf"/>
</dbReference>
<dbReference type="NCBIfam" id="TIGR00487">
    <property type="entry name" value="IF-2"/>
    <property type="match status" value="1"/>
</dbReference>
<dbReference type="NCBIfam" id="TIGR00231">
    <property type="entry name" value="small_GTP"/>
    <property type="match status" value="1"/>
</dbReference>
<dbReference type="PANTHER" id="PTHR43381:SF5">
    <property type="entry name" value="TR-TYPE G DOMAIN-CONTAINING PROTEIN"/>
    <property type="match status" value="1"/>
</dbReference>
<dbReference type="PANTHER" id="PTHR43381">
    <property type="entry name" value="TRANSLATION INITIATION FACTOR IF-2-RELATED"/>
    <property type="match status" value="1"/>
</dbReference>
<dbReference type="Pfam" id="PF22042">
    <property type="entry name" value="EF-G_D2"/>
    <property type="match status" value="1"/>
</dbReference>
<dbReference type="Pfam" id="PF00009">
    <property type="entry name" value="GTP_EFTU"/>
    <property type="match status" value="1"/>
</dbReference>
<dbReference type="Pfam" id="PF11987">
    <property type="entry name" value="IF-2"/>
    <property type="match status" value="1"/>
</dbReference>
<dbReference type="Pfam" id="PF08364">
    <property type="entry name" value="IF2_assoc"/>
    <property type="match status" value="1"/>
</dbReference>
<dbReference type="Pfam" id="PF04760">
    <property type="entry name" value="IF2_N"/>
    <property type="match status" value="1"/>
</dbReference>
<dbReference type="SUPFAM" id="SSF52156">
    <property type="entry name" value="Initiation factor IF2/eIF5b, domain 3"/>
    <property type="match status" value="1"/>
</dbReference>
<dbReference type="SUPFAM" id="SSF52540">
    <property type="entry name" value="P-loop containing nucleoside triphosphate hydrolases"/>
    <property type="match status" value="1"/>
</dbReference>
<dbReference type="SUPFAM" id="SSF46955">
    <property type="entry name" value="Putative DNA-binding domain"/>
    <property type="match status" value="1"/>
</dbReference>
<dbReference type="SUPFAM" id="SSF50447">
    <property type="entry name" value="Translation proteins"/>
    <property type="match status" value="2"/>
</dbReference>
<dbReference type="PROSITE" id="PS51722">
    <property type="entry name" value="G_TR_2"/>
    <property type="match status" value="1"/>
</dbReference>
<dbReference type="PROSITE" id="PS01176">
    <property type="entry name" value="IF2"/>
    <property type="match status" value="1"/>
</dbReference>
<gene>
    <name evidence="2" type="primary">infB</name>
    <name type="ordered locus">BPEN_108</name>
</gene>
<feature type="chain" id="PRO_0000228173" description="Translation initiation factor IF-2">
    <location>
        <begin position="1"/>
        <end position="891"/>
    </location>
</feature>
<feature type="domain" description="tr-type G">
    <location>
        <begin position="390"/>
        <end position="559"/>
    </location>
</feature>
<feature type="region of interest" description="G1" evidence="1">
    <location>
        <begin position="399"/>
        <end position="406"/>
    </location>
</feature>
<feature type="region of interest" description="G2" evidence="1">
    <location>
        <begin position="424"/>
        <end position="428"/>
    </location>
</feature>
<feature type="region of interest" description="G3" evidence="1">
    <location>
        <begin position="445"/>
        <end position="448"/>
    </location>
</feature>
<feature type="region of interest" description="G4" evidence="1">
    <location>
        <begin position="499"/>
        <end position="502"/>
    </location>
</feature>
<feature type="region of interest" description="G5" evidence="1">
    <location>
        <begin position="535"/>
        <end position="537"/>
    </location>
</feature>
<feature type="binding site" evidence="2">
    <location>
        <begin position="399"/>
        <end position="406"/>
    </location>
    <ligand>
        <name>GTP</name>
        <dbReference type="ChEBI" id="CHEBI:37565"/>
    </ligand>
</feature>
<feature type="binding site" evidence="2">
    <location>
        <begin position="445"/>
        <end position="449"/>
    </location>
    <ligand>
        <name>GTP</name>
        <dbReference type="ChEBI" id="CHEBI:37565"/>
    </ligand>
</feature>
<feature type="binding site" evidence="2">
    <location>
        <begin position="499"/>
        <end position="502"/>
    </location>
    <ligand>
        <name>GTP</name>
        <dbReference type="ChEBI" id="CHEBI:37565"/>
    </ligand>
</feature>
<reference key="1">
    <citation type="journal article" date="2005" name="Genome Res.">
        <title>Genome sequence of Blochmannia pennsylvanicus indicates parallel evolutionary trends among bacterial mutualists of insects.</title>
        <authorList>
            <person name="Degnan P.H."/>
            <person name="Lazarus A.B."/>
            <person name="Wernegreen J.J."/>
        </authorList>
    </citation>
    <scope>NUCLEOTIDE SEQUENCE [LARGE SCALE GENOMIC DNA]</scope>
    <source>
        <strain>BPEN</strain>
    </source>
</reference>
<keyword id="KW-0963">Cytoplasm</keyword>
<keyword id="KW-0342">GTP-binding</keyword>
<keyword id="KW-0396">Initiation factor</keyword>
<keyword id="KW-0547">Nucleotide-binding</keyword>
<keyword id="KW-0648">Protein biosynthesis</keyword>
<keyword id="KW-1185">Reference proteome</keyword>
<organism>
    <name type="scientific">Blochmanniella pennsylvanica (strain BPEN)</name>
    <dbReference type="NCBI Taxonomy" id="291272"/>
    <lineage>
        <taxon>Bacteria</taxon>
        <taxon>Pseudomonadati</taxon>
        <taxon>Pseudomonadota</taxon>
        <taxon>Gammaproteobacteria</taxon>
        <taxon>Enterobacterales</taxon>
        <taxon>Enterobacteriaceae</taxon>
        <taxon>ant endosymbionts</taxon>
        <taxon>Candidatus Blochmanniella</taxon>
    </lineage>
</organism>
<proteinExistence type="inferred from homology"/>
<sequence length="891" mass="99368">MTDTTIQSFAAEMKMSVDQLIQWFSYIGILKTEIGIVTQREKEILFKYMNDNKSDISKKLILQRKTRSILSVSSVGGKNKKVQIEIRKKLTYVQSTLQETEFIDVKNKMVLDANREASSLIVRNNRLVNKKISNTLGPSSLTKISKKNHRYSELIEHKEKVIGKISRKFEDKSLQDSDETQLLKKKTKNCWDIELNNTNAISSNLGDSSSNSKLYCMPELLEKNNNQKLENERRNRSRVRTRYRNGGKLTKQHKRGNHHRLYEATSDEFGMEEELYIPNRVNKSKRKQSALVQVFNKPVQTITRDIIIGQTISVAELANKMSIKSSRVIKTMMQLGIIATINQIIDQDTAQLVAEEMGHNVILRRENELEELIMNDRDIDITSSDTTLANRAPIVTIMGHVDHGKTSLLDRIRSTKIASSEVGGITQSIGAYHVSTDNGMITFLDTPGHAAFTAMRARGVQITDIVVLVVAADDGVMPQTIEAIEHIKAANVPVVVAINKIDKSEANPERIKNDLNNHGLIPEEWGGDTQFIHVSATSGNGIDNLLDAILLQSDMLELKVVHHGMARAIVIESFLDKGRGPVVAVLVREGTLKCGDIILCGTEYGRVRAMRNEFGHEITSAGPSIPVELLGLSGSPASGESVIVVRNEKKAREVALYRQGKSREIKLARQKEPNIENIFSSIKNTSVVSELNLIVKSDTKGSSEAIRESLENLSTGGDVTIKILSSSIGGITETDVALAAASNAVIVGFNVRADPTARRIIEADQLDVRYYSVIYDLIDEVKQAVHGMLAPRYKHEIIGLAKVRNVFRSPKYGNVAGCMVVEGMIKRYKKIRVIRDNIVVHEGELESLRRFKDDVNEVRSGIECGIGIKNYKNIHSGDMIEVFDMVKISHV</sequence>
<comment type="function">
    <text evidence="2">One of the essential components for the initiation of protein synthesis. Protects formylmethionyl-tRNA from spontaneous hydrolysis and promotes its binding to the 30S ribosomal subunits. Also involved in the hydrolysis of GTP during the formation of the 70S ribosomal complex.</text>
</comment>
<comment type="subcellular location">
    <subcellularLocation>
        <location evidence="2">Cytoplasm</location>
    </subcellularLocation>
</comment>
<comment type="similarity">
    <text evidence="2">Belongs to the TRAFAC class translation factor GTPase superfamily. Classic translation factor GTPase family. IF-2 subfamily.</text>
</comment>
<evidence type="ECO:0000250" key="1"/>
<evidence type="ECO:0000255" key="2">
    <source>
        <dbReference type="HAMAP-Rule" id="MF_00100"/>
    </source>
</evidence>